<organism>
    <name type="scientific">Human immunodeficiency virus type 1 group N (isolate YBF106)</name>
    <name type="common">HIV-1</name>
    <dbReference type="NCBI Taxonomy" id="388819"/>
    <lineage>
        <taxon>Viruses</taxon>
        <taxon>Riboviria</taxon>
        <taxon>Pararnavirae</taxon>
        <taxon>Artverviricota</taxon>
        <taxon>Revtraviricetes</taxon>
        <taxon>Ortervirales</taxon>
        <taxon>Retroviridae</taxon>
        <taxon>Orthoretrovirinae</taxon>
        <taxon>Lentivirus</taxon>
        <taxon>Human immunodeficiency virus type 1</taxon>
    </lineage>
</organism>
<gene>
    <name evidence="1" type="primary">tat</name>
</gene>
<proteinExistence type="inferred from homology"/>
<comment type="function">
    <text evidence="1">Transcriptional activator that increases RNA Pol II processivity, thereby increasing the level of full-length viral transcripts. Recognizes a hairpin structure at the 5'-LTR of the nascent viral mRNAs referred to as the transactivation responsive RNA element (TAR) and recruits the cyclin T1-CDK9 complex (P-TEFb complex) that will in turn hyperphosphorylate the RNA polymerase II to allow efficient elongation. The CDK9 component of P-TEFb and other Tat-activated kinases hyperphosphorylate the C-terminus of RNA Pol II that becomes stabilized and much more processive. Other factors such as HTATSF1/Tat-SF1, SUPT5H/SPT5, and HTATIP2 are also important for Tat's function. Besides its effect on RNA Pol II processivity, Tat induces chromatin remodeling of proviral genes by recruiting the histone acetyltransferases (HATs) CREBBP, EP300 and PCAF to the chromatin. This also contributes to the increase in proviral transcription rate, especially when the provirus integrates in transcriptionally silent region of the host genome. To ensure maximal activation of the LTR, Tat mediates nuclear translocation of NF-kappa-B by interacting with host RELA. Through its interaction with host TBP, Tat may also modulate transcription initiation. Tat can reactivate a latently infected cell by penetrating in it and transactivating its LTR promoter. In the cytoplasm, Tat is thought to act as a translational activator of HIV-1 mRNAs.</text>
</comment>
<comment type="function">
    <text evidence="1">Extracellular circulating Tat can be endocytosed by surrounding uninfected cells via the binding to several surface receptors such as CD26, CXCR4, heparan sulfate proteoglycans (HSPG) or LDLR. Neurons are rarely infected, but they internalize Tat via their LDLR. Through its interaction with nuclear HATs, Tat is potentially able to control the acetylation-dependent cellular gene expression. Modulates the expression of many cellular genes involved in cell survival, proliferation or in coding for cytokines or cytokine receptors. Tat plays a role in T-cell and neurons apoptosis. Tat induced neurotoxicity and apoptosis probably contribute to neuroAIDS. Circulating Tat also acts as a chemokine-like and/or growth factor-like molecule that binds to specific receptors on the surface of the cells, affecting many cellular pathways. In the vascular system, Tat binds to ITGAV/ITGB3 and ITGA5/ITGB1 integrins dimers at the surface of endothelial cells and competes with bFGF for heparin-binding sites, leading to an excess of soluble bFGF.</text>
</comment>
<comment type="subunit">
    <text evidence="1">Interacts with host CCNT1. Associates with the P-TEFb complex composed at least of Tat, P-TEFb (CDK9 and CCNT1), TAR RNA, RNA Pol II. Recruits the HATs CREBBP, TAF1/TFIID, EP300, PCAF and GCN5L2. Interacts with host KAT5/Tip60; this interaction targets the latter to degradation. Interacts with the host deacetylase SIRT1. Interacts with host capping enzyme RNGTT; this interaction stimulates RNGTT. Binds to host KDR, and to the host integrins ITGAV/ITGB3 and ITGA5/ITGB1. Interacts with host KPNB1/importin beta-1 without previous binding to KPNA1/importin alpha-1. Interacts with EIF2AK2. Interacts with host nucleosome assembly protein NAP1L1; this interaction may be required for the transport of Tat within the nucleus, since the two proteins interact at the nuclear rim. Interacts with host C1QBP/SF2P32; this interaction involves lysine-acetylated Tat. Interacts with the host chemokine receptors CCR2, CCR3 and CXCR4. Interacts with host DPP4/CD26; this interaction may trigger an anti-proliferative effect. Interacts with host LDLR. Interacts with the host extracellular matrix metalloproteinase MMP1. Interacts with host PRMT6; this interaction mediates Tat's methylation. Interacts with, and is ubiquitinated by MDM2/Hdm2. Interacts with host PSMC3 and HTATIP2. Interacts with STAB1; this interaction may overcome SATB1-mediated repression of IL2 and IL2RA (interleukin) in T cells by binding to the same domain than HDAC1. Interacts (when acetylated) with human CDK13, thereby increasing HIV-1 mRNA splicing and promoting the production of the doubly spliced HIV-1 protein Nef. Interacts with host TBP; this interaction modulates the activity of transcriptional pre-initiation complex. Interacts with host RELA. Interacts with host PLSCR1; this interaction negatively regulates Tat transactivation activity by altering its subcellular distribution.</text>
</comment>
<comment type="subcellular location">
    <subcellularLocation>
        <location evidence="1">Host nucleus</location>
        <location evidence="1">Host nucleolus</location>
    </subcellularLocation>
    <subcellularLocation>
        <location evidence="1">Host cytoplasm</location>
    </subcellularLocation>
    <subcellularLocation>
        <location evidence="1">Secreted</location>
    </subcellularLocation>
    <text evidence="1">Probably localizes to both nuclear and nucleolar compartments. Nuclear localization is mediated through the interaction of the nuclear localization signal with importin KPNB1. Secretion occurs through a Golgi-independent pathway. Tat is released from infected cells to the extracellular space where it remains associated to the cell membrane, or is secreted into the cerebrospinal fluid and sera. Extracellular Tat can be endocytosed by surrounding uninfected cells via binding to several receptors depending on the cell type.</text>
</comment>
<comment type="alternative products">
    <event type="alternative splicing"/>
    <isoform>
        <id>Q9IDV5-1</id>
        <name>Long</name>
        <sequence type="displayed"/>
    </isoform>
    <isoform>
        <id>Q9IDV5-2</id>
        <name>Short</name>
        <sequence type="described" ref="VSP_022432"/>
    </isoform>
</comment>
<comment type="domain">
    <text evidence="1">The cell attachment site mediates the interaction with ITGAV/ITGB3 and ITGA5/ITGB1 integrins, leading to vascular cell migration and invasion. This interaction also provides endothelial cells with the adhesion signal they require to grow in response to mitogens.</text>
</comment>
<comment type="domain">
    <text evidence="1">The Cys-rich region may bind 2 zinc ions. This region is involved in binding to KAT5.</text>
</comment>
<comment type="domain">
    <text evidence="1">The transactivation domain mediates the interaction with CCNT1, GCN5L2, and MDM2.</text>
</comment>
<comment type="domain">
    <text evidence="1">The Arg-rich RNA-binding region binds the TAR RNA. This region also mediates the nuclear localization through direct binding to KPNB1 and is involved in Tat's transfer across cell membranes (protein transduction). The same region is required for the interaction with EP300, PCAF, EIF2AK2 and KDR.</text>
</comment>
<comment type="PTM">
    <text evidence="1">Asymmetrical arginine methylation by host PRMT6 seems to diminish the transactivation capacity of Tat and affects the interaction with host CCNT1.</text>
</comment>
<comment type="PTM">
    <text evidence="1">Acetylation by EP300, CREBBP, GCN5L2/GCN5 and PCAF regulates the transactivation activity of Tat. EP300-mediated acetylation of Lys-50 promotes dissociation of Tat from the TAR RNA through the competitive binding to PCAF's bromodomain. In addition, the non-acetylated Tat's N-terminus can also interact with PCAF. PCAF-mediated acetylation of Lys-28 enhances Tat's binding to CCNT1. Lys-50 is deacetylated by SIRT1.</text>
</comment>
<comment type="PTM">
    <text evidence="1">Polyubiquitination by host MDM2 does not target Tat to degradation, but activates its transactivation function and fosters interaction with CCNT1 and TAR RNA.</text>
</comment>
<comment type="PTM">
    <text evidence="1">Phosphorylated by EIF2AK2 on serine and threonine residues adjacent to the basic region important for TAR RNA binding and function. Phosphorylation of Tat by EIF2AK2 is dependent on the prior activation of EIF2AK2 by dsRNA.</text>
</comment>
<comment type="miscellaneous">
    <text evidence="1">HIV-1 lineages are divided in three main groups, M (for Major), O (for Outlier), and N (for New, or Non-M, Non-O). The vast majority of strains found worldwide belong to the group M. Group O seems to be endemic to and largely confined to Cameroon and neighboring countries in West Central Africa, where these viruses represent a small minority of HIV-1 strains. The group N is represented by a limited number of isolates from Cameroonian persons. The group M is further subdivided in 9 clades or subtypes (A to D, F to H, J and K).</text>
</comment>
<comment type="miscellaneous">
    <molecule>Isoform Short</molecule>
    <text evidence="3">Expressed in the late stage of the infection cycle, when unspliced viral RNAs are exported to the cytoplasm by the viral Rev protein.</text>
</comment>
<comment type="similarity">
    <text evidence="1">Belongs to the lentiviruses Tat family.</text>
</comment>
<keyword id="KW-0007">Acetylation</keyword>
<keyword id="KW-0010">Activator</keyword>
<keyword id="KW-0014">AIDS</keyword>
<keyword id="KW-0025">Alternative splicing</keyword>
<keyword id="KW-0053">Apoptosis</keyword>
<keyword id="KW-1035">Host cytoplasm</keyword>
<keyword id="KW-1048">Host nucleus</keyword>
<keyword id="KW-0945">Host-virus interaction</keyword>
<keyword id="KW-1090">Inhibition of host innate immune response by virus</keyword>
<keyword id="KW-1114">Inhibition of host interferon signaling pathway by virus</keyword>
<keyword id="KW-0922">Interferon antiviral system evasion</keyword>
<keyword id="KW-1017">Isopeptide bond</keyword>
<keyword id="KW-0479">Metal-binding</keyword>
<keyword id="KW-0488">Methylation</keyword>
<keyword id="KW-1122">Modulation of host chromatin by virus</keyword>
<keyword id="KW-1126">Modulation of host PP1 activity by virus</keyword>
<keyword id="KW-0597">Phosphoprotein</keyword>
<keyword id="KW-0694">RNA-binding</keyword>
<keyword id="KW-0964">Secreted</keyword>
<keyword id="KW-0804">Transcription</keyword>
<keyword id="KW-0805">Transcription regulation</keyword>
<keyword id="KW-0832">Ubl conjugation</keyword>
<keyword id="KW-0899">Viral immunoevasion</keyword>
<keyword id="KW-0862">Zinc</keyword>
<evidence type="ECO:0000255" key="1">
    <source>
        <dbReference type="HAMAP-Rule" id="MF_04079"/>
    </source>
</evidence>
<evidence type="ECO:0000256" key="2">
    <source>
        <dbReference type="SAM" id="MobiDB-lite"/>
    </source>
</evidence>
<evidence type="ECO:0000305" key="3"/>
<organismHost>
    <name type="scientific">Homo sapiens</name>
    <name type="common">Human</name>
    <dbReference type="NCBI Taxonomy" id="9606"/>
</organismHost>
<protein>
    <recommendedName>
        <fullName evidence="1">Protein Tat</fullName>
    </recommendedName>
    <alternativeName>
        <fullName evidence="1">Transactivating regulatory protein</fullName>
    </alternativeName>
</protein>
<dbReference type="EMBL" id="AJ271370">
    <property type="protein sequence ID" value="CAB96342.1"/>
    <property type="molecule type" value="Genomic_DNA"/>
</dbReference>
<dbReference type="SMR" id="Q9IDV5"/>
<dbReference type="Proteomes" id="UP000007714">
    <property type="component" value="Segment"/>
</dbReference>
<dbReference type="GO" id="GO:0005576">
    <property type="term" value="C:extracellular region"/>
    <property type="evidence" value="ECO:0007669"/>
    <property type="project" value="UniProtKB-SubCell"/>
</dbReference>
<dbReference type="GO" id="GO:0030430">
    <property type="term" value="C:host cell cytoplasm"/>
    <property type="evidence" value="ECO:0007669"/>
    <property type="project" value="UniProtKB-SubCell"/>
</dbReference>
<dbReference type="GO" id="GO:0044196">
    <property type="term" value="C:host cell nucleolus"/>
    <property type="evidence" value="ECO:0007669"/>
    <property type="project" value="UniProtKB-SubCell"/>
</dbReference>
<dbReference type="GO" id="GO:0042805">
    <property type="term" value="F:actinin binding"/>
    <property type="evidence" value="ECO:0007669"/>
    <property type="project" value="UniProtKB-UniRule"/>
</dbReference>
<dbReference type="GO" id="GO:0030332">
    <property type="term" value="F:cyclin binding"/>
    <property type="evidence" value="ECO:0007669"/>
    <property type="project" value="UniProtKB-UniRule"/>
</dbReference>
<dbReference type="GO" id="GO:0046872">
    <property type="term" value="F:metal ion binding"/>
    <property type="evidence" value="ECO:0007669"/>
    <property type="project" value="UniProtKB-UniRule"/>
</dbReference>
<dbReference type="GO" id="GO:0019904">
    <property type="term" value="F:protein domain specific binding"/>
    <property type="evidence" value="ECO:0007669"/>
    <property type="project" value="UniProtKB-UniRule"/>
</dbReference>
<dbReference type="GO" id="GO:0004865">
    <property type="term" value="F:protein serine/threonine phosphatase inhibitor activity"/>
    <property type="evidence" value="ECO:0007669"/>
    <property type="project" value="UniProtKB-KW"/>
</dbReference>
<dbReference type="GO" id="GO:0001070">
    <property type="term" value="F:RNA-binding transcription regulator activity"/>
    <property type="evidence" value="ECO:0007669"/>
    <property type="project" value="UniProtKB-UniRule"/>
</dbReference>
<dbReference type="GO" id="GO:1990970">
    <property type="term" value="F:trans-activation response element binding"/>
    <property type="evidence" value="ECO:0007669"/>
    <property type="project" value="UniProtKB-UniRule"/>
</dbReference>
<dbReference type="GO" id="GO:0006351">
    <property type="term" value="P:DNA-templated transcription"/>
    <property type="evidence" value="ECO:0007669"/>
    <property type="project" value="UniProtKB-UniRule"/>
</dbReference>
<dbReference type="GO" id="GO:0032968">
    <property type="term" value="P:positive regulation of transcription elongation by RNA polymerase II"/>
    <property type="evidence" value="ECO:0007669"/>
    <property type="project" value="UniProtKB-UniRule"/>
</dbReference>
<dbReference type="GO" id="GO:0050434">
    <property type="term" value="P:positive regulation of viral transcription"/>
    <property type="evidence" value="ECO:0007669"/>
    <property type="project" value="UniProtKB-UniRule"/>
</dbReference>
<dbReference type="GO" id="GO:0039525">
    <property type="term" value="P:symbiont-mediated perturbation of host chromatin organization"/>
    <property type="evidence" value="ECO:0007669"/>
    <property type="project" value="UniProtKB-UniRule"/>
</dbReference>
<dbReference type="GO" id="GO:0052170">
    <property type="term" value="P:symbiont-mediated suppression of host innate immune response"/>
    <property type="evidence" value="ECO:0007669"/>
    <property type="project" value="UniProtKB-KW"/>
</dbReference>
<dbReference type="GO" id="GO:0039606">
    <property type="term" value="P:symbiont-mediated suppression of host translation initiation"/>
    <property type="evidence" value="ECO:0007669"/>
    <property type="project" value="UniProtKB-KW"/>
</dbReference>
<dbReference type="GO" id="GO:0039502">
    <property type="term" value="P:symbiont-mediated suppression of host type I interferon-mediated signaling pathway"/>
    <property type="evidence" value="ECO:0007669"/>
    <property type="project" value="UniProtKB-UniRule"/>
</dbReference>
<dbReference type="Gene3D" id="4.10.20.10">
    <property type="entry name" value="Tat domain"/>
    <property type="match status" value="1"/>
</dbReference>
<dbReference type="HAMAP" id="MF_04079">
    <property type="entry name" value="HIV_TAT"/>
    <property type="match status" value="1"/>
</dbReference>
<dbReference type="InterPro" id="IPR001831">
    <property type="entry name" value="IV_Tat"/>
</dbReference>
<dbReference type="InterPro" id="IPR036963">
    <property type="entry name" value="Tat_dom_sf"/>
</dbReference>
<dbReference type="Pfam" id="PF00539">
    <property type="entry name" value="Tat"/>
    <property type="match status" value="1"/>
</dbReference>
<dbReference type="PRINTS" id="PR00055">
    <property type="entry name" value="HIVTATDOMAIN"/>
</dbReference>
<reference key="1">
    <citation type="journal article" date="2004" name="AIDS">
        <title>Phylogenetic characteristics of three new HIV-1 N strains and implications for the origin of group N.</title>
        <authorList>
            <person name="Roques P."/>
            <person name="Robertson D.L."/>
            <person name="Souquiere S."/>
            <person name="Apetrei C."/>
            <person name="Nerrienet E."/>
            <person name="Barre-Sinoussi F."/>
            <person name="Muller-Trutwin M."/>
            <person name="Simon F."/>
        </authorList>
    </citation>
    <scope>NUCLEOTIDE SEQUENCE [GENOMIC DNA]</scope>
</reference>
<reference key="2">
    <citation type="journal article" date="2005" name="Microbes Infect.">
        <title>Decoding Tat: the biology of HIV Tat posttranslational modifications.</title>
        <authorList>
            <person name="Hetzer C."/>
            <person name="Dormeyer W."/>
            <person name="Schnolzer M."/>
            <person name="Ott M."/>
        </authorList>
    </citation>
    <scope>REVIEW</scope>
    <scope>ALTERNATIVE SPLICING</scope>
</reference>
<reference key="3">
    <citation type="journal article" date="2006" name="Front. Biosci.">
        <title>The multiple functions of HIV-1 Tat: proliferation versus apoptosis.</title>
        <authorList>
            <person name="Peruzzi F."/>
        </authorList>
    </citation>
    <scope>REVIEW</scope>
</reference>
<reference key="4">
    <citation type="journal article" date="2006" name="Microbes Infect.">
        <title>HIV tat and neurotoxicity.</title>
        <authorList>
            <person name="King J.E."/>
            <person name="Eugenin E.A."/>
            <person name="Buckner C.M."/>
            <person name="Berman J.W."/>
        </authorList>
    </citation>
    <scope>REVIEW</scope>
</reference>
<accession>Q9IDV5</accession>
<name>TAT_HV1YB</name>
<feature type="chain" id="PRO_0000244860" description="Protein Tat">
    <location>
        <begin position="1"/>
        <end position="102"/>
    </location>
</feature>
<feature type="region of interest" description="Transactivation" evidence="1">
    <location>
        <begin position="1"/>
        <end position="48"/>
    </location>
</feature>
<feature type="region of interest" description="Interaction with human CREBBP" evidence="1">
    <location>
        <begin position="1"/>
        <end position="24"/>
    </location>
</feature>
<feature type="region of interest" description="Disordered" evidence="2">
    <location>
        <begin position="1"/>
        <end position="20"/>
    </location>
</feature>
<feature type="region of interest" description="Cysteine-rich" evidence="1">
    <location>
        <begin position="22"/>
        <end position="37"/>
    </location>
</feature>
<feature type="region of interest" description="Core" evidence="1">
    <location>
        <begin position="38"/>
        <end position="48"/>
    </location>
</feature>
<feature type="region of interest" description="Disordered" evidence="2">
    <location>
        <begin position="47"/>
        <end position="102"/>
    </location>
</feature>
<feature type="region of interest" description="Interaction with the host capping enzyme RNGTT" evidence="1">
    <location>
        <begin position="49"/>
        <end position="87"/>
    </location>
</feature>
<feature type="short sequence motif" description="Nuclear localization signal, RNA-binding (TAR), and protein transduction" evidence="1">
    <location>
        <begin position="49"/>
        <end position="57"/>
    </location>
</feature>
<feature type="compositionally biased region" description="Basic and acidic residues" evidence="2">
    <location>
        <begin position="1"/>
        <end position="10"/>
    </location>
</feature>
<feature type="compositionally biased region" description="Basic residues" evidence="2">
    <location>
        <begin position="48"/>
        <end position="60"/>
    </location>
</feature>
<feature type="compositionally biased region" description="Polar residues" evidence="2">
    <location>
        <begin position="74"/>
        <end position="85"/>
    </location>
</feature>
<feature type="compositionally biased region" description="Basic and acidic residues" evidence="2">
    <location>
        <begin position="90"/>
        <end position="102"/>
    </location>
</feature>
<feature type="binding site" evidence="1">
    <location>
        <position position="22"/>
    </location>
    <ligand>
        <name>Zn(2+)</name>
        <dbReference type="ChEBI" id="CHEBI:29105"/>
        <label>1</label>
    </ligand>
</feature>
<feature type="binding site" evidence="1">
    <location>
        <position position="25"/>
    </location>
    <ligand>
        <name>Zn(2+)</name>
        <dbReference type="ChEBI" id="CHEBI:29105"/>
        <label>2</label>
    </ligand>
</feature>
<feature type="binding site" evidence="1">
    <location>
        <position position="27"/>
    </location>
    <ligand>
        <name>Zn(2+)</name>
        <dbReference type="ChEBI" id="CHEBI:29105"/>
        <label>2</label>
    </ligand>
</feature>
<feature type="binding site" evidence="1">
    <location>
        <position position="30"/>
    </location>
    <ligand>
        <name>Zn(2+)</name>
        <dbReference type="ChEBI" id="CHEBI:29105"/>
        <label>2</label>
    </ligand>
</feature>
<feature type="binding site" evidence="1">
    <location>
        <position position="33"/>
    </location>
    <ligand>
        <name>Zn(2+)</name>
        <dbReference type="ChEBI" id="CHEBI:29105"/>
        <label>1</label>
    </ligand>
</feature>
<feature type="binding site" evidence="1">
    <location>
        <position position="34"/>
    </location>
    <ligand>
        <name>Zn(2+)</name>
        <dbReference type="ChEBI" id="CHEBI:29105"/>
        <label>1</label>
    </ligand>
</feature>
<feature type="binding site" evidence="1">
    <location>
        <position position="37"/>
    </location>
    <ligand>
        <name>Zn(2+)</name>
        <dbReference type="ChEBI" id="CHEBI:29105"/>
        <label>1</label>
    </ligand>
</feature>
<feature type="site" description="Essential for Tat translocation through the endosomal membrane" evidence="1">
    <location>
        <position position="11"/>
    </location>
</feature>
<feature type="modified residue" description="N6-acetyllysine; by host PCAF" evidence="1">
    <location>
        <position position="28"/>
    </location>
</feature>
<feature type="modified residue" description="N6-acetyllysine; by host EP300 and GCN5L2" evidence="1">
    <location>
        <position position="50"/>
    </location>
</feature>
<feature type="modified residue" description="N6-acetyllysine; by host EP300 and GCN5L2" evidence="1">
    <location>
        <position position="51"/>
    </location>
</feature>
<feature type="modified residue" description="Asymmetric dimethylarginine; by host PRMT6" evidence="1">
    <location>
        <position position="52"/>
    </location>
</feature>
<feature type="splice variant" id="VSP_022432" description="In isoform Short.">
    <location>
        <begin position="73"/>
        <end position="102"/>
    </location>
</feature>
<sequence>MEPVDPRLEPWNHPGSQPKTACNKCYCKKCCYHCMCCFTKKGLGISYGRKKRSQRRRPPKSSKDHQDPIPEQPLSRQQPGDQTGQKKQKKALEGKTEADPCD</sequence>